<proteinExistence type="inferred from homology"/>
<accession>C5D3S2</accession>
<feature type="chain" id="PRO_1000214607" description="Large ribosomal subunit protein uL22">
    <location>
        <begin position="1"/>
        <end position="113"/>
    </location>
</feature>
<protein>
    <recommendedName>
        <fullName evidence="1">Large ribosomal subunit protein uL22</fullName>
    </recommendedName>
    <alternativeName>
        <fullName evidence="2">50S ribosomal protein L22</fullName>
    </alternativeName>
</protein>
<evidence type="ECO:0000255" key="1">
    <source>
        <dbReference type="HAMAP-Rule" id="MF_01331"/>
    </source>
</evidence>
<evidence type="ECO:0000305" key="2"/>
<comment type="function">
    <text evidence="1">This protein binds specifically to 23S rRNA; its binding is stimulated by other ribosomal proteins, e.g. L4, L17, and L20. It is important during the early stages of 50S assembly. It makes multiple contacts with different domains of the 23S rRNA in the assembled 50S subunit and ribosome (By similarity).</text>
</comment>
<comment type="function">
    <text evidence="1">The globular domain of the protein is located near the polypeptide exit tunnel on the outside of the subunit, while an extended beta-hairpin is found that lines the wall of the exit tunnel in the center of the 70S ribosome.</text>
</comment>
<comment type="subunit">
    <text evidence="1">Part of the 50S ribosomal subunit.</text>
</comment>
<comment type="similarity">
    <text evidence="1">Belongs to the universal ribosomal protein uL22 family.</text>
</comment>
<dbReference type="EMBL" id="CP001638">
    <property type="protein sequence ID" value="ACS23056.1"/>
    <property type="molecule type" value="Genomic_DNA"/>
</dbReference>
<dbReference type="SMR" id="C5D3S2"/>
<dbReference type="STRING" id="471223.GWCH70_0116"/>
<dbReference type="KEGG" id="gwc:GWCH70_0116"/>
<dbReference type="eggNOG" id="COG0091">
    <property type="taxonomic scope" value="Bacteria"/>
</dbReference>
<dbReference type="HOGENOM" id="CLU_083987_3_3_9"/>
<dbReference type="OrthoDB" id="9805969at2"/>
<dbReference type="GO" id="GO:0022625">
    <property type="term" value="C:cytosolic large ribosomal subunit"/>
    <property type="evidence" value="ECO:0007669"/>
    <property type="project" value="TreeGrafter"/>
</dbReference>
<dbReference type="GO" id="GO:0019843">
    <property type="term" value="F:rRNA binding"/>
    <property type="evidence" value="ECO:0007669"/>
    <property type="project" value="UniProtKB-UniRule"/>
</dbReference>
<dbReference type="GO" id="GO:0003735">
    <property type="term" value="F:structural constituent of ribosome"/>
    <property type="evidence" value="ECO:0007669"/>
    <property type="project" value="InterPro"/>
</dbReference>
<dbReference type="GO" id="GO:0006412">
    <property type="term" value="P:translation"/>
    <property type="evidence" value="ECO:0007669"/>
    <property type="project" value="UniProtKB-UniRule"/>
</dbReference>
<dbReference type="CDD" id="cd00336">
    <property type="entry name" value="Ribosomal_L22"/>
    <property type="match status" value="1"/>
</dbReference>
<dbReference type="FunFam" id="3.90.470.10:FF:000001">
    <property type="entry name" value="50S ribosomal protein L22"/>
    <property type="match status" value="1"/>
</dbReference>
<dbReference type="Gene3D" id="3.90.470.10">
    <property type="entry name" value="Ribosomal protein L22/L17"/>
    <property type="match status" value="1"/>
</dbReference>
<dbReference type="HAMAP" id="MF_01331_B">
    <property type="entry name" value="Ribosomal_uL22_B"/>
    <property type="match status" value="1"/>
</dbReference>
<dbReference type="InterPro" id="IPR001063">
    <property type="entry name" value="Ribosomal_uL22"/>
</dbReference>
<dbReference type="InterPro" id="IPR005727">
    <property type="entry name" value="Ribosomal_uL22_bac/chlpt-type"/>
</dbReference>
<dbReference type="InterPro" id="IPR047867">
    <property type="entry name" value="Ribosomal_uL22_bac/org-type"/>
</dbReference>
<dbReference type="InterPro" id="IPR018260">
    <property type="entry name" value="Ribosomal_uL22_CS"/>
</dbReference>
<dbReference type="InterPro" id="IPR036394">
    <property type="entry name" value="Ribosomal_uL22_sf"/>
</dbReference>
<dbReference type="NCBIfam" id="TIGR01044">
    <property type="entry name" value="rplV_bact"/>
    <property type="match status" value="1"/>
</dbReference>
<dbReference type="PANTHER" id="PTHR13501">
    <property type="entry name" value="CHLOROPLAST 50S RIBOSOMAL PROTEIN L22-RELATED"/>
    <property type="match status" value="1"/>
</dbReference>
<dbReference type="PANTHER" id="PTHR13501:SF8">
    <property type="entry name" value="LARGE RIBOSOMAL SUBUNIT PROTEIN UL22M"/>
    <property type="match status" value="1"/>
</dbReference>
<dbReference type="Pfam" id="PF00237">
    <property type="entry name" value="Ribosomal_L22"/>
    <property type="match status" value="1"/>
</dbReference>
<dbReference type="SUPFAM" id="SSF54843">
    <property type="entry name" value="Ribosomal protein L22"/>
    <property type="match status" value="1"/>
</dbReference>
<dbReference type="PROSITE" id="PS00464">
    <property type="entry name" value="RIBOSOMAL_L22"/>
    <property type="match status" value="1"/>
</dbReference>
<keyword id="KW-0687">Ribonucleoprotein</keyword>
<keyword id="KW-0689">Ribosomal protein</keyword>
<keyword id="KW-0694">RNA-binding</keyword>
<keyword id="KW-0699">rRNA-binding</keyword>
<gene>
    <name evidence="1" type="primary">rplV</name>
    <name type="ordered locus">GWCH70_0116</name>
</gene>
<reference key="1">
    <citation type="submission" date="2009-06" db="EMBL/GenBank/DDBJ databases">
        <title>Complete sequence of chromosome of Geopacillus sp. WCH70.</title>
        <authorList>
            <consortium name="US DOE Joint Genome Institute"/>
            <person name="Lucas S."/>
            <person name="Copeland A."/>
            <person name="Lapidus A."/>
            <person name="Glavina del Rio T."/>
            <person name="Dalin E."/>
            <person name="Tice H."/>
            <person name="Bruce D."/>
            <person name="Goodwin L."/>
            <person name="Pitluck S."/>
            <person name="Chertkov O."/>
            <person name="Brettin T."/>
            <person name="Detter J.C."/>
            <person name="Han C."/>
            <person name="Larimer F."/>
            <person name="Land M."/>
            <person name="Hauser L."/>
            <person name="Kyrpides N."/>
            <person name="Mikhailova N."/>
            <person name="Brumm P."/>
            <person name="Mead D.A."/>
            <person name="Richardson P."/>
        </authorList>
    </citation>
    <scope>NUCLEOTIDE SEQUENCE [LARGE SCALE GENOMIC DNA]</scope>
    <source>
        <strain>WCH70</strain>
    </source>
</reference>
<sequence>MQAKAVARTVRIAPRKARLVIDLIRGKEVGEAVAILRHTPKAASPIIEKVLKSAVANAEHNYDMDVNKLVITEAYVDEGPTLKRFRPRAMGRASAINKRTSHITIVVSEKKEG</sequence>
<organism>
    <name type="scientific">Geobacillus sp. (strain WCH70)</name>
    <dbReference type="NCBI Taxonomy" id="471223"/>
    <lineage>
        <taxon>Bacteria</taxon>
        <taxon>Bacillati</taxon>
        <taxon>Bacillota</taxon>
        <taxon>Bacilli</taxon>
        <taxon>Bacillales</taxon>
        <taxon>Anoxybacillaceae</taxon>
        <taxon>Geobacillus</taxon>
    </lineage>
</organism>
<name>RL22_GEOSW</name>